<accession>Q7YCA5</accession>
<reference key="1">
    <citation type="submission" date="2003-06" db="EMBL/GenBank/DDBJ databases">
        <title>Cloning of Yak mtDNA ATPase 8 and ATPase 6.</title>
        <authorList>
            <person name="Zhao X."/>
            <person name="Li Q."/>
            <person name="Li N."/>
        </authorList>
    </citation>
    <scope>NUCLEOTIDE SEQUENCE [GENOMIC DNA]</scope>
</reference>
<reference key="2">
    <citation type="submission" date="2004-10" db="EMBL/GenBank/DDBJ databases">
        <title>Complete sequence of the Yak (Bos grunniens.) mitochondrial genome and its genetic relationship with related species.</title>
        <authorList>
            <person name="Gu Z."/>
            <person name="Zhao X."/>
            <person name="Li N."/>
            <person name="Wu C."/>
        </authorList>
    </citation>
    <scope>NUCLEOTIDE SEQUENCE [GENOMIC DNA]</scope>
</reference>
<gene>
    <name evidence="1" type="primary">MT-ATP6</name>
    <name type="synonym">ATP6</name>
    <name type="synonym">ATPASE6</name>
    <name type="synonym">MTATP6</name>
</gene>
<evidence type="ECO:0000250" key="1">
    <source>
        <dbReference type="UniProtKB" id="P00846"/>
    </source>
</evidence>
<evidence type="ECO:0000255" key="2"/>
<evidence type="ECO:0000305" key="3"/>
<organism>
    <name type="scientific">Bos mutus grunniens</name>
    <name type="common">Wild yak</name>
    <name type="synonym">Bos grunniens</name>
    <dbReference type="NCBI Taxonomy" id="30521"/>
    <lineage>
        <taxon>Eukaryota</taxon>
        <taxon>Metazoa</taxon>
        <taxon>Chordata</taxon>
        <taxon>Craniata</taxon>
        <taxon>Vertebrata</taxon>
        <taxon>Euteleostomi</taxon>
        <taxon>Mammalia</taxon>
        <taxon>Eutheria</taxon>
        <taxon>Laurasiatheria</taxon>
        <taxon>Artiodactyla</taxon>
        <taxon>Ruminantia</taxon>
        <taxon>Pecora</taxon>
        <taxon>Bovidae</taxon>
        <taxon>Bovinae</taxon>
        <taxon>Bos</taxon>
    </lineage>
</organism>
<name>ATP6_BOSMU</name>
<comment type="function">
    <text evidence="1">Subunit a, of the mitochondrial membrane ATP synthase complex (F(1)F(0) ATP synthase or Complex V) that produces ATP from ADP in the presence of a proton gradient across the membrane which is generated by electron transport complexes of the respiratory chain. ATP synthase complex consist of a soluble F(1) head domain - the catalytic core - and a membrane F(1) domain - the membrane proton channel. These two domains are linked by a central stalk rotating inside the F(1) region and a stationary peripheral stalk. During catalysis, ATP synthesis in the catalytic domain of F(1) is coupled via a rotary mechanism of the central stalk subunits to proton translocation. With the subunit c (ATP5MC1), forms the proton-conducting channel in the F(0) domain, that contains two crucial half-channels (inlet and outlet) that facilitate proton movement from the mitochondrial intermembrane space (IMS) into the matrix. Protons are taken up via the inlet half-channel and released through the outlet half-channel, following a Grotthuss mechanism.</text>
</comment>
<comment type="catalytic activity">
    <reaction evidence="1">
        <text>H(+)(in) = H(+)(out)</text>
        <dbReference type="Rhea" id="RHEA:34979"/>
        <dbReference type="ChEBI" id="CHEBI:15378"/>
    </reaction>
</comment>
<comment type="subunit">
    <text evidence="1">Component of the ATP synthase complex composed at least of ATP5F1A/subunit alpha, ATP5F1B/subunit beta, ATP5MC1/subunit c (homooctomer), MT-ATP6/subunit a, MT-ATP8/subunit 8, ATP5ME/subunit e, ATP5MF/subunit f, ATP5MG/subunit g, ATP5MK/subunit k, ATP5MJ/subunit j, ATP5F1C/subunit gamma, ATP5F1D/subunit delta, ATP5F1E/subunit epsilon, ATP5PF/subunit F6, ATP5PB/subunit b, ATP5PD/subunit d, ATP5PO/subunit OSCP. ATP synthase complex consists of a soluble F(1) head domain (subunits alpha(3) and beta(3)) - the catalytic core - and a membrane F(0) domain - the membrane proton channel (subunits c, a, 8, e, f, g, k and j). These two domains are linked by a central stalk (subunits gamma, delta, and epsilon) rotating inside the F1 region and a stationary peripheral stalk (subunits F6, b, d, and OSCP). Interacts with DNAJC30; interaction is direct.</text>
</comment>
<comment type="subcellular location">
    <subcellularLocation>
        <location>Mitochondrion inner membrane</location>
        <topology>Multi-pass membrane protein</topology>
    </subcellularLocation>
</comment>
<comment type="similarity">
    <text evidence="3">Belongs to the ATPase A chain family.</text>
</comment>
<keyword id="KW-0066">ATP synthesis</keyword>
<keyword id="KW-0138">CF(0)</keyword>
<keyword id="KW-0375">Hydrogen ion transport</keyword>
<keyword id="KW-0406">Ion transport</keyword>
<keyword id="KW-0472">Membrane</keyword>
<keyword id="KW-0496">Mitochondrion</keyword>
<keyword id="KW-0999">Mitochondrion inner membrane</keyword>
<keyword id="KW-1185">Reference proteome</keyword>
<keyword id="KW-0812">Transmembrane</keyword>
<keyword id="KW-1133">Transmembrane helix</keyword>
<keyword id="KW-0813">Transport</keyword>
<sequence>MNENLFASFITPMILGLPLVTLIVLFPSLLFPTSDRLVNNRFVTLQQWMLQLVSKQMMSIHNPKGQTWTLMLMSLILFIGSTNLLGLLPHSFTPTTQLSMNLGMAISLWAGAVITGFRNKTKTSLAHFLPQGTPTPLIPMLVIIETISLFIQPMALAVRLTANITAGHLLIHLIGGATLALMSISATTALITFIILILLTILEFAVAMIQAYVFTLLVSLYLHDNT</sequence>
<geneLocation type="mitochondrion"/>
<feature type="chain" id="PRO_0000253508" description="ATP synthase F(0) complex subunit a">
    <location>
        <begin position="1"/>
        <end position="226"/>
    </location>
</feature>
<feature type="transmembrane region" description="Helical" evidence="2">
    <location>
        <begin position="6"/>
        <end position="26"/>
    </location>
</feature>
<feature type="transmembrane region" description="Helical" evidence="2">
    <location>
        <begin position="68"/>
        <end position="88"/>
    </location>
</feature>
<feature type="transmembrane region" description="Helical" evidence="2">
    <location>
        <begin position="97"/>
        <end position="117"/>
    </location>
</feature>
<feature type="transmembrane region" description="Helical" evidence="2">
    <location>
        <begin position="138"/>
        <end position="158"/>
    </location>
</feature>
<feature type="transmembrane region" description="Helical" evidence="2">
    <location>
        <begin position="164"/>
        <end position="184"/>
    </location>
</feature>
<feature type="transmembrane region" description="Helical" evidence="2">
    <location>
        <begin position="200"/>
        <end position="222"/>
    </location>
</feature>
<dbReference type="EMBL" id="AY325806">
    <property type="protein sequence ID" value="AAP87310.1"/>
    <property type="molecule type" value="Genomic_DNA"/>
</dbReference>
<dbReference type="EMBL" id="AY684273">
    <property type="protein sequence ID" value="AAU89111.1"/>
    <property type="molecule type" value="Genomic_DNA"/>
</dbReference>
<dbReference type="SMR" id="Q7YCA5"/>
<dbReference type="Proteomes" id="UP000694520">
    <property type="component" value="Unplaced"/>
</dbReference>
<dbReference type="GO" id="GO:0005743">
    <property type="term" value="C:mitochondrial inner membrane"/>
    <property type="evidence" value="ECO:0007669"/>
    <property type="project" value="UniProtKB-SubCell"/>
</dbReference>
<dbReference type="GO" id="GO:0045259">
    <property type="term" value="C:proton-transporting ATP synthase complex"/>
    <property type="evidence" value="ECO:0000250"/>
    <property type="project" value="UniProtKB"/>
</dbReference>
<dbReference type="GO" id="GO:0015252">
    <property type="term" value="F:proton channel activity"/>
    <property type="evidence" value="ECO:0000250"/>
    <property type="project" value="UniProtKB"/>
</dbReference>
<dbReference type="GO" id="GO:0046933">
    <property type="term" value="F:proton-transporting ATP synthase activity, rotational mechanism"/>
    <property type="evidence" value="ECO:0007669"/>
    <property type="project" value="TreeGrafter"/>
</dbReference>
<dbReference type="GO" id="GO:0015986">
    <property type="term" value="P:proton motive force-driven ATP synthesis"/>
    <property type="evidence" value="ECO:0000250"/>
    <property type="project" value="UniProtKB"/>
</dbReference>
<dbReference type="GO" id="GO:1902600">
    <property type="term" value="P:proton transmembrane transport"/>
    <property type="evidence" value="ECO:0000250"/>
    <property type="project" value="UniProtKB"/>
</dbReference>
<dbReference type="CDD" id="cd00310">
    <property type="entry name" value="ATP-synt_Fo_a_6"/>
    <property type="match status" value="1"/>
</dbReference>
<dbReference type="FunFam" id="1.20.120.220:FF:000004">
    <property type="entry name" value="ATP synthase subunit a"/>
    <property type="match status" value="1"/>
</dbReference>
<dbReference type="Gene3D" id="1.20.120.220">
    <property type="entry name" value="ATP synthase, F0 complex, subunit A"/>
    <property type="match status" value="1"/>
</dbReference>
<dbReference type="InterPro" id="IPR000568">
    <property type="entry name" value="ATP_synth_F0_asu"/>
</dbReference>
<dbReference type="InterPro" id="IPR023011">
    <property type="entry name" value="ATP_synth_F0_asu_AS"/>
</dbReference>
<dbReference type="InterPro" id="IPR045083">
    <property type="entry name" value="ATP_synth_F0_asu_bact/mt"/>
</dbReference>
<dbReference type="InterPro" id="IPR035908">
    <property type="entry name" value="F0_ATP_A_sf"/>
</dbReference>
<dbReference type="NCBIfam" id="TIGR01131">
    <property type="entry name" value="ATP_synt_6_or_A"/>
    <property type="match status" value="1"/>
</dbReference>
<dbReference type="PANTHER" id="PTHR11410">
    <property type="entry name" value="ATP SYNTHASE SUBUNIT A"/>
    <property type="match status" value="1"/>
</dbReference>
<dbReference type="PANTHER" id="PTHR11410:SF0">
    <property type="entry name" value="ATP SYNTHASE SUBUNIT A"/>
    <property type="match status" value="1"/>
</dbReference>
<dbReference type="Pfam" id="PF00119">
    <property type="entry name" value="ATP-synt_A"/>
    <property type="match status" value="1"/>
</dbReference>
<dbReference type="PRINTS" id="PR00123">
    <property type="entry name" value="ATPASEA"/>
</dbReference>
<dbReference type="SUPFAM" id="SSF81336">
    <property type="entry name" value="F1F0 ATP synthase subunit A"/>
    <property type="match status" value="1"/>
</dbReference>
<dbReference type="PROSITE" id="PS00449">
    <property type="entry name" value="ATPASE_A"/>
    <property type="match status" value="1"/>
</dbReference>
<proteinExistence type="inferred from homology"/>
<protein>
    <recommendedName>
        <fullName evidence="1">ATP synthase F(0) complex subunit a</fullName>
    </recommendedName>
    <alternativeName>
        <fullName>F-ATPase protein 6</fullName>
    </alternativeName>
    <alternativeName>
        <fullName evidence="1">Proton-conducting channel, ATP synthase F(0) complex subunit a</fullName>
    </alternativeName>
</protein>